<organism>
    <name type="scientific">Pseudomonas putida</name>
    <name type="common">Arthrobacter siderocapsulatus</name>
    <dbReference type="NCBI Taxonomy" id="303"/>
    <lineage>
        <taxon>Bacteria</taxon>
        <taxon>Pseudomonadati</taxon>
        <taxon>Pseudomonadota</taxon>
        <taxon>Gammaproteobacteria</taxon>
        <taxon>Pseudomonadales</taxon>
        <taxon>Pseudomonadaceae</taxon>
        <taxon>Pseudomonas</taxon>
    </lineage>
</organism>
<evidence type="ECO:0000255" key="1">
    <source>
        <dbReference type="PROSITE-ProRule" id="PRU00628"/>
    </source>
</evidence>
<evidence type="ECO:0000269" key="2">
    <source>
    </source>
</evidence>
<evidence type="ECO:0000269" key="3">
    <source>
    </source>
</evidence>
<evidence type="ECO:0000269" key="4">
    <source>
    </source>
</evidence>
<evidence type="ECO:0000269" key="5">
    <source>
    </source>
</evidence>
<evidence type="ECO:0000269" key="6">
    <source>
    </source>
</evidence>
<evidence type="ECO:0000269" key="7">
    <source>
    </source>
</evidence>
<evidence type="ECO:0000303" key="8">
    <source>
    </source>
</evidence>
<evidence type="ECO:0000303" key="9">
    <source>
    </source>
</evidence>
<evidence type="ECO:0000303" key="10">
    <source>
    </source>
</evidence>
<evidence type="ECO:0000303" key="11">
    <source>
    </source>
</evidence>
<evidence type="ECO:0000305" key="12"/>
<evidence type="ECO:0000305" key="13">
    <source>
    </source>
</evidence>
<evidence type="ECO:0000305" key="14">
    <source>
    </source>
</evidence>
<evidence type="ECO:0007744" key="15">
    <source>
        <dbReference type="PDB" id="1EG9"/>
    </source>
</evidence>
<evidence type="ECO:0007744" key="16">
    <source>
        <dbReference type="PDB" id="1NDO"/>
    </source>
</evidence>
<evidence type="ECO:0007744" key="17">
    <source>
        <dbReference type="PDB" id="1O7G"/>
    </source>
</evidence>
<evidence type="ECO:0007744" key="18">
    <source>
        <dbReference type="PDB" id="1O7H"/>
    </source>
</evidence>
<evidence type="ECO:0007744" key="19">
    <source>
        <dbReference type="PDB" id="1O7M"/>
    </source>
</evidence>
<evidence type="ECO:0007744" key="20">
    <source>
        <dbReference type="PDB" id="1O7N"/>
    </source>
</evidence>
<evidence type="ECO:0007744" key="21">
    <source>
        <dbReference type="PDB" id="1O7P"/>
    </source>
</evidence>
<evidence type="ECO:0007744" key="22">
    <source>
        <dbReference type="PDB" id="1O7W"/>
    </source>
</evidence>
<evidence type="ECO:0007744" key="23">
    <source>
        <dbReference type="PDB" id="1UUV"/>
    </source>
</evidence>
<evidence type="ECO:0007744" key="24">
    <source>
        <dbReference type="PDB" id="1UUW"/>
    </source>
</evidence>
<evidence type="ECO:0007829" key="25">
    <source>
        <dbReference type="PDB" id="1O7N"/>
    </source>
</evidence>
<comment type="function">
    <text evidence="3 6">Component of the naphthalene dioxygenase (NDO) multicomponent enzyme system which catalyzes the incorporation of both atoms of molecular oxygen into naphthalene to form cis-(1R,2S)-dihydroxy-1,2-dihydronaphthalene. The alpha subunit has a catalytic role in the holoenzyme. Also able to catalyze the cis-dihydroxylation of biphenyl and phenanthrene (PubMed:10692370).</text>
</comment>
<comment type="catalytic activity">
    <reaction evidence="3 6">
        <text>naphthalene + NADH + O2 + H(+) = (1R,2S)-1,2-dihydronaphthalene-1,2-diol + NAD(+)</text>
        <dbReference type="Rhea" id="RHEA:19173"/>
        <dbReference type="ChEBI" id="CHEBI:15378"/>
        <dbReference type="ChEBI" id="CHEBI:15379"/>
        <dbReference type="ChEBI" id="CHEBI:16482"/>
        <dbReference type="ChEBI" id="CHEBI:44343"/>
        <dbReference type="ChEBI" id="CHEBI:57540"/>
        <dbReference type="ChEBI" id="CHEBI:57945"/>
        <dbReference type="EC" id="1.14.12.12"/>
    </reaction>
</comment>
<comment type="cofactor">
    <cofactor evidence="2 4 5 6 7">
        <name>[2Fe-2S] cluster</name>
        <dbReference type="ChEBI" id="CHEBI:190135"/>
    </cofactor>
    <text evidence="2 4 5 6 7">Binds 1 [2Fe-2S] cluster.</text>
</comment>
<comment type="cofactor">
    <cofactor evidence="2 4 5 7">
        <name>Fe(2+)</name>
        <dbReference type="ChEBI" id="CHEBI:29033"/>
    </cofactor>
    <text evidence="2 4 5 7">Binds 1 Fe(2+) ion per subunit.</text>
</comment>
<comment type="pathway">
    <text evidence="13">Aromatic compound metabolism; naphthalene degradation.</text>
</comment>
<comment type="subunit">
    <text evidence="4 5 7 14">The naphthalene dioxygenase (NDO) multicomponent enzyme system is composed of an electron transfer component and a dioxygenase component (iron sulfur protein (ISP)). The electron transfer component is composed of a ferredoxin reductase (NdoR) and a ferredoxin (NdoA), and the dioxygenase component is formed of a heterohexamer (trimer of heterodimers) of three large alpha subunits (NdoB) and three small beta subunits (NdoC).</text>
</comment>
<comment type="interaction">
    <interactant intactId="EBI-1029015">
        <id>P0A110</id>
    </interactant>
    <interactant intactId="EBI-1029028">
        <id>P0A112</id>
        <label>ndoC</label>
    </interactant>
    <organismsDiffer>false</organismsDiffer>
    <experiments>7</experiments>
</comment>
<comment type="similarity">
    <text evidence="12">Belongs to the bacterial ring-hydroxylating dioxygenase alpha subunit family.</text>
</comment>
<protein>
    <recommendedName>
        <fullName evidence="12">Naphthalene 1,2-dioxygenase system, large oxygenase component</fullName>
        <ecNumber evidence="3 6">1.14.12.12</ecNumber>
    </recommendedName>
    <alternativeName>
        <fullName evidence="9">ISP NAP</fullName>
    </alternativeName>
    <alternativeName>
        <fullName evidence="9">Naphthalene 1,2-dioxygenase ISP alpha</fullName>
    </alternativeName>
    <alternativeName>
        <fullName evidence="9">Naphthalene 1,2-dioxygenase subunit alpha</fullName>
        <shortName evidence="8">ND subunit alpha</shortName>
        <shortName evidence="11">NDO subunit alpha</shortName>
    </alternativeName>
</protein>
<sequence length="449" mass="49608">MNYNNKILVSESGLSQKHLIHGDEELFQHELKTIFARNWLFLTHDSLIPAPGDYVTAKMGIDEVIVSRQNDGSIRAFLNVCRHRGKTLVSVEAGNAKGFVCSYHGWGFGSNGELQSVPFEKDLYGESLNKKCLGLKEVARVESFHGFIYGCFDQEAPPLMDYLGDAAWYLEPMFKHSGGLELVGPPGKVVIKANWKAPAENFVGDAYHVGWTHASSLRSGESIFSSLAGNAALPPEGAGLQMTSKYGSGMGVLWDGYSGVHSADLVPELMAFGGAKQERLNKEIGDVRARIYRSHLNCTVFPNNSMLTCSGVFKVWNPIDANTTEVWTYAIVEKDMPEDLKRRLADSVQRTFGPAGFWESDDNDNMETASQNGKKYQSRDSDLLSNLGFGEDVYGDAVYPGVVGKSAIGETSYRGFYRAYQAHVSSSNWAEFEHASSTWHTELTKTTDR</sequence>
<name>NDOB_PSEPU</name>
<geneLocation type="plasmid">
    <name>pDTG1</name>
</geneLocation>
<geneLocation type="plasmid">
    <name>NAH7</name>
</geneLocation>
<geneLocation type="plasmid">
    <name>NPL1</name>
</geneLocation>
<gene>
    <name evidence="8" type="primary">ndoB</name>
    <name type="synonym">nahA3</name>
    <name evidence="10" type="synonym">nahAC</name>
    <name type="synonym">ndoC2</name>
</gene>
<proteinExistence type="evidence at protein level"/>
<keyword id="KW-0001">2Fe-2S</keyword>
<keyword id="KW-0002">3D-structure</keyword>
<keyword id="KW-0058">Aromatic hydrocarbons catabolism</keyword>
<keyword id="KW-0223">Dioxygenase</keyword>
<keyword id="KW-0408">Iron</keyword>
<keyword id="KW-0411">Iron-sulfur</keyword>
<keyword id="KW-0479">Metal-binding</keyword>
<keyword id="KW-0520">NAD</keyword>
<keyword id="KW-0560">Oxidoreductase</keyword>
<keyword id="KW-0614">Plasmid</keyword>
<feature type="chain" id="PRO_0000085053" description="Naphthalene 1,2-dioxygenase system, large oxygenase component">
    <location>
        <begin position="1"/>
        <end position="449"/>
    </location>
</feature>
<feature type="domain" description="Rieske" evidence="1">
    <location>
        <begin position="39"/>
        <end position="137"/>
    </location>
</feature>
<feature type="binding site" evidence="2 4 5 7 15 16 17 18 19 20 21 22 23 24">
    <location>
        <position position="81"/>
    </location>
    <ligand>
        <name>[2Fe-2S] cluster</name>
        <dbReference type="ChEBI" id="CHEBI:190135"/>
    </ligand>
</feature>
<feature type="binding site" evidence="2 4 5 7 15 16 17 18 19 20 21 22 23 24">
    <location>
        <position position="83"/>
    </location>
    <ligand>
        <name>[2Fe-2S] cluster</name>
        <dbReference type="ChEBI" id="CHEBI:190135"/>
    </ligand>
</feature>
<feature type="binding site" evidence="2 4 5 7 15 16 17 18 19 20 21 22 23 24">
    <location>
        <position position="101"/>
    </location>
    <ligand>
        <name>[2Fe-2S] cluster</name>
        <dbReference type="ChEBI" id="CHEBI:190135"/>
    </ligand>
</feature>
<feature type="binding site" evidence="2 4 5 7 15 16 17 18 19 20 21 22 23 24">
    <location>
        <position position="104"/>
    </location>
    <ligand>
        <name>[2Fe-2S] cluster</name>
        <dbReference type="ChEBI" id="CHEBI:190135"/>
    </ligand>
</feature>
<feature type="binding site" evidence="2 4 5 7 15 16 17 18 19 20 21 22 23 24">
    <location>
        <position position="208"/>
    </location>
    <ligand>
        <name>Fe cation</name>
        <dbReference type="ChEBI" id="CHEBI:24875"/>
    </ligand>
</feature>
<feature type="binding site" evidence="2 4 5 7 15 16 17 18 19 20 21 22 23 24">
    <location>
        <position position="213"/>
    </location>
    <ligand>
        <name>Fe cation</name>
        <dbReference type="ChEBI" id="CHEBI:24875"/>
    </ligand>
</feature>
<feature type="binding site" evidence="2 4 5 7 15 16 17 18 19 20 21 22 23">
    <location>
        <position position="362"/>
    </location>
    <ligand>
        <name>Fe cation</name>
        <dbReference type="ChEBI" id="CHEBI:24875"/>
    </ligand>
</feature>
<feature type="site" description="Important for enantioselectivity" evidence="3">
    <location>
        <position position="352"/>
    </location>
</feature>
<feature type="sequence variant" description="In strain: G7.">
    <original>N</original>
    <variation>K</variation>
    <location>
        <position position="4"/>
    </location>
</feature>
<feature type="sequence variant" description="In strain: ATCC 17484.">
    <original>S</original>
    <variation>F</variation>
    <location>
        <position position="12"/>
    </location>
</feature>
<feature type="sequence variant" description="In strain: G7.">
    <original>S</original>
    <variation>T</variation>
    <location>
        <position position="15"/>
    </location>
</feature>
<feature type="sequence variant" description="In strain: G7.">
    <original>K</original>
    <variation>R</variation>
    <location>
        <position position="32"/>
    </location>
</feature>
<feature type="sequence variant" description="In strain: G7.">
    <original>A</original>
    <variation>S</variation>
    <location>
        <position position="50"/>
    </location>
</feature>
<feature type="sequence variant" description="In strain: G7.">
    <original>N</original>
    <variation>S</variation>
    <location>
        <position position="70"/>
    </location>
</feature>
<feature type="sequence variant" description="In strain: G7.">
    <original>SV</original>
    <variation>NA</variation>
    <location>
        <begin position="90"/>
        <end position="91"/>
    </location>
</feature>
<feature type="sequence variant" description="In strain: G7.">
    <original>D</original>
    <variation>E</variation>
    <location>
        <position position="122"/>
    </location>
</feature>
<feature type="sequence variant" description="In strain: G7.">
    <original>M</original>
    <variation>I</variation>
    <location>
        <position position="173"/>
    </location>
</feature>
<feature type="sequence variant" description="In strain: G7.">
    <original>S</original>
    <variation>A</variation>
    <location>
        <position position="225"/>
    </location>
</feature>
<feature type="sequence variant" description="In strain: BS202.">
    <original>S</original>
    <variation>C</variation>
    <location>
        <position position="225"/>
    </location>
</feature>
<feature type="sequence variant" description="In strain: G7.">
    <original>A</original>
    <variation>V</variation>
    <location>
        <position position="232"/>
    </location>
</feature>
<feature type="sequence variant" description="In strain: G7.">
    <original>A</original>
    <variation>S</variation>
    <location>
        <position position="275"/>
    </location>
</feature>
<feature type="sequence variant" description="In strain: G7.">
    <original>E</original>
    <variation>K</variation>
    <location>
        <position position="391"/>
    </location>
</feature>
<feature type="sequence variant" description="In strain: ATCC 17484.">
    <original>Q</original>
    <variation>R</variation>
    <location>
        <position position="421"/>
    </location>
</feature>
<feature type="sequence variant" description="In strain: G7.">
    <original>H</original>
    <variation>D</variation>
    <location>
        <position position="434"/>
    </location>
</feature>
<feature type="mutagenesis site" description="Unable to catalyze the cis-dihydroxylation of biphenyl." evidence="3">
    <original>N</original>
    <variation>A</variation>
    <location>
        <position position="201"/>
    </location>
</feature>
<feature type="mutagenesis site" description="Unable to catalyze the cis-dihydroxylation of naphthalene, biphenyl and phenanthrene." evidence="3">
    <original>F</original>
    <variation>L</variation>
    <location>
        <position position="202"/>
    </location>
</feature>
<feature type="mutagenesis site" description="Cis-dihydroxylation of naphthalene results in the formation of cis-naphthalene dihydrodiol with altered stereochemistry. Cis-dihydroxylation of biphenyl results in the formation of cis-biphenyl 3,4-dihydrodiol as the major product." evidence="3">
    <original>F</original>
    <variation>L</variation>
    <location>
        <position position="352"/>
    </location>
</feature>
<feature type="mutagenesis site" description="Cis-dihydroxylation of naphthalene results in the formation of cis-naphthalene dihydrodiol with altered stereochemistry. Cis-dihydroxylation of biphenyl and phenanthrene results in the formation of cis-biphenyl 3,4-dihydrodiol and cis-phenanthrene 1,2-dihydrodiol as the major product, respectively." evidence="3">
    <original>F</original>
    <variation>V</variation>
    <location>
        <position position="352"/>
    </location>
</feature>
<feature type="mutagenesis site" description="Unable to catalyze the cis-dihydroxylation of biphenyl. Preferentially oxidizes phenanthrene at the C-3 and C-4 positions, forming almost no cis-phenanthrene 1,2-dihydrodiol." evidence="3">
    <original>W</original>
    <variation>A</variation>
    <location>
        <position position="358"/>
    </location>
</feature>
<feature type="mutagenesis site" description="Unable to catalyze the cis-dihydroxylation of naphthalene, biphenyl and phenanthrene." evidence="3">
    <original>D</original>
    <variation>A</variation>
    <location>
        <position position="362"/>
    </location>
</feature>
<feature type="turn" evidence="25">
    <location>
        <begin position="3"/>
        <end position="5"/>
    </location>
</feature>
<feature type="helix" evidence="25">
    <location>
        <begin position="11"/>
        <end position="13"/>
    </location>
</feature>
<feature type="strand" evidence="25">
    <location>
        <begin position="15"/>
        <end position="17"/>
    </location>
</feature>
<feature type="helix" evidence="25">
    <location>
        <begin position="18"/>
        <end position="21"/>
    </location>
</feature>
<feature type="helix" evidence="25">
    <location>
        <begin position="24"/>
        <end position="33"/>
    </location>
</feature>
<feature type="turn" evidence="25">
    <location>
        <begin position="34"/>
        <end position="37"/>
    </location>
</feature>
<feature type="strand" evidence="25">
    <location>
        <begin position="40"/>
        <end position="44"/>
    </location>
</feature>
<feature type="helix" evidence="25">
    <location>
        <begin position="45"/>
        <end position="47"/>
    </location>
</feature>
<feature type="strand" evidence="25">
    <location>
        <begin position="53"/>
        <end position="59"/>
    </location>
</feature>
<feature type="strand" evidence="25">
    <location>
        <begin position="62"/>
        <end position="68"/>
    </location>
</feature>
<feature type="strand" evidence="25">
    <location>
        <begin position="74"/>
        <end position="80"/>
    </location>
</feature>
<feature type="turn" evidence="25">
    <location>
        <begin position="82"/>
        <end position="84"/>
    </location>
</feature>
<feature type="strand" evidence="25">
    <location>
        <begin position="91"/>
        <end position="95"/>
    </location>
</feature>
<feature type="strand" evidence="25">
    <location>
        <begin position="97"/>
        <end position="100"/>
    </location>
</feature>
<feature type="turn" evidence="25">
    <location>
        <begin position="102"/>
        <end position="104"/>
    </location>
</feature>
<feature type="strand" evidence="25">
    <location>
        <begin position="107"/>
        <end position="109"/>
    </location>
</feature>
<feature type="strand" evidence="25">
    <location>
        <begin position="114"/>
        <end position="116"/>
    </location>
</feature>
<feature type="helix" evidence="25">
    <location>
        <begin position="120"/>
        <end position="123"/>
    </location>
</feature>
<feature type="turn" evidence="25">
    <location>
        <begin position="124"/>
        <end position="126"/>
    </location>
</feature>
<feature type="helix" evidence="25">
    <location>
        <begin position="130"/>
        <end position="132"/>
    </location>
</feature>
<feature type="strand" evidence="25">
    <location>
        <begin position="139"/>
        <end position="144"/>
    </location>
</feature>
<feature type="strand" evidence="25">
    <location>
        <begin position="147"/>
        <end position="152"/>
    </location>
</feature>
<feature type="helix" evidence="25">
    <location>
        <begin position="159"/>
        <end position="163"/>
    </location>
</feature>
<feature type="helix" evidence="25">
    <location>
        <begin position="166"/>
        <end position="174"/>
    </location>
</feature>
<feature type="turn" evidence="25">
    <location>
        <begin position="175"/>
        <end position="177"/>
    </location>
</feature>
<feature type="strand" evidence="25">
    <location>
        <begin position="180"/>
        <end position="193"/>
    </location>
</feature>
<feature type="helix" evidence="25">
    <location>
        <begin position="196"/>
        <end position="204"/>
    </location>
</feature>
<feature type="helix" evidence="25">
    <location>
        <begin position="209"/>
        <end position="212"/>
    </location>
</feature>
<feature type="helix" evidence="25">
    <location>
        <begin position="214"/>
        <end position="220"/>
    </location>
</feature>
<feature type="helix" evidence="25">
    <location>
        <begin position="225"/>
        <end position="230"/>
    </location>
</feature>
<feature type="strand" evidence="25">
    <location>
        <begin position="238"/>
        <end position="243"/>
    </location>
</feature>
<feature type="strand" evidence="25">
    <location>
        <begin position="249"/>
        <end position="253"/>
    </location>
</feature>
<feature type="turn" evidence="25">
    <location>
        <begin position="257"/>
        <end position="260"/>
    </location>
</feature>
<feature type="turn" evidence="25">
    <location>
        <begin position="263"/>
        <end position="265"/>
    </location>
</feature>
<feature type="helix" evidence="25">
    <location>
        <begin position="266"/>
        <end position="284"/>
    </location>
</feature>
<feature type="helix" evidence="25">
    <location>
        <begin position="286"/>
        <end position="292"/>
    </location>
</feature>
<feature type="strand" evidence="25">
    <location>
        <begin position="294"/>
        <end position="300"/>
    </location>
</feature>
<feature type="turn" evidence="25">
    <location>
        <begin position="301"/>
        <end position="303"/>
    </location>
</feature>
<feature type="strand" evidence="25">
    <location>
        <begin position="304"/>
        <end position="307"/>
    </location>
</feature>
<feature type="turn" evidence="25">
    <location>
        <begin position="308"/>
        <end position="311"/>
    </location>
</feature>
<feature type="strand" evidence="25">
    <location>
        <begin position="312"/>
        <end position="320"/>
    </location>
</feature>
<feature type="strand" evidence="25">
    <location>
        <begin position="323"/>
        <end position="333"/>
    </location>
</feature>
<feature type="helix" evidence="25">
    <location>
        <begin position="338"/>
        <end position="352"/>
    </location>
</feature>
<feature type="helix" evidence="25">
    <location>
        <begin position="357"/>
        <end position="372"/>
    </location>
</feature>
<feature type="turn" evidence="25">
    <location>
        <begin position="376"/>
        <end position="380"/>
    </location>
</feature>
<feature type="strand" evidence="25">
    <location>
        <begin position="382"/>
        <end position="384"/>
    </location>
</feature>
<feature type="turn" evidence="25">
    <location>
        <begin position="387"/>
        <end position="390"/>
    </location>
</feature>
<feature type="strand" evidence="25">
    <location>
        <begin position="393"/>
        <end position="395"/>
    </location>
</feature>
<feature type="strand" evidence="25">
    <location>
        <begin position="397"/>
        <end position="399"/>
    </location>
</feature>
<feature type="strand" evidence="25">
    <location>
        <begin position="401"/>
        <end position="408"/>
    </location>
</feature>
<feature type="helix" evidence="25">
    <location>
        <begin position="411"/>
        <end position="424"/>
    </location>
</feature>
<feature type="helix" evidence="25">
    <location>
        <begin position="429"/>
        <end position="435"/>
    </location>
</feature>
<feature type="turn" evidence="25">
    <location>
        <begin position="436"/>
        <end position="438"/>
    </location>
</feature>
<feature type="helix" evidence="25">
    <location>
        <begin position="439"/>
        <end position="444"/>
    </location>
</feature>
<accession>P0A110</accession>
<accession>O07830</accession>
<accession>O33461</accession>
<accession>P23094</accession>
<accession>Q52124</accession>
<dbReference type="EC" id="1.14.12.12" evidence="3 6"/>
<dbReference type="EMBL" id="M23914">
    <property type="protein sequence ID" value="AAB47591.1"/>
    <property type="molecule type" value="Genomic_DNA"/>
</dbReference>
<dbReference type="EMBL" id="AF010471">
    <property type="protein sequence ID" value="AAB62707.1"/>
    <property type="molecule type" value="Genomic_DNA"/>
</dbReference>
<dbReference type="EMBL" id="U49496">
    <property type="protein sequence ID" value="AAA92141.1"/>
    <property type="molecule type" value="Genomic_DNA"/>
</dbReference>
<dbReference type="EMBL" id="M83949">
    <property type="protein sequence ID" value="AAA25902.1"/>
    <property type="molecule type" value="Genomic_DNA"/>
</dbReference>
<dbReference type="EMBL" id="AF004284">
    <property type="protein sequence ID" value="AAB61373.1"/>
    <property type="molecule type" value="Genomic_DNA"/>
</dbReference>
<dbReference type="PIR" id="JN0644">
    <property type="entry name" value="JN0644"/>
</dbReference>
<dbReference type="PIR" id="JS0071">
    <property type="entry name" value="JS0071"/>
</dbReference>
<dbReference type="RefSeq" id="NP_863072.1">
    <property type="nucleotide sequence ID" value="NC_004999.1"/>
</dbReference>
<dbReference type="RefSeq" id="WP_011117400.1">
    <property type="nucleotide sequence ID" value="NZ_CP059053.1"/>
</dbReference>
<dbReference type="RefSeq" id="YP_534822.1">
    <property type="nucleotide sequence ID" value="NC_007926.1"/>
</dbReference>
<dbReference type="PDB" id="1EG9">
    <property type="method" value="X-ray"/>
    <property type="resolution" value="1.60 A"/>
    <property type="chains" value="A=1-449"/>
</dbReference>
<dbReference type="PDB" id="1NDO">
    <property type="method" value="X-ray"/>
    <property type="resolution" value="2.25 A"/>
    <property type="chains" value="A/C/E=1-449"/>
</dbReference>
<dbReference type="PDB" id="1O7G">
    <property type="method" value="X-ray"/>
    <property type="resolution" value="1.70 A"/>
    <property type="chains" value="A=1-449"/>
</dbReference>
<dbReference type="PDB" id="1O7H">
    <property type="method" value="X-ray"/>
    <property type="resolution" value="2.20 A"/>
    <property type="chains" value="A=1-449"/>
</dbReference>
<dbReference type="PDB" id="1O7M">
    <property type="method" value="X-ray"/>
    <property type="resolution" value="1.75 A"/>
    <property type="chains" value="A=1-449"/>
</dbReference>
<dbReference type="PDB" id="1O7N">
    <property type="method" value="X-ray"/>
    <property type="resolution" value="1.40 A"/>
    <property type="chains" value="A=1-449"/>
</dbReference>
<dbReference type="PDB" id="1O7P">
    <property type="method" value="X-ray"/>
    <property type="resolution" value="1.95 A"/>
    <property type="chains" value="A=1-449"/>
</dbReference>
<dbReference type="PDB" id="1O7W">
    <property type="method" value="X-ray"/>
    <property type="resolution" value="1.90 A"/>
    <property type="chains" value="A=1-449"/>
</dbReference>
<dbReference type="PDB" id="1UUV">
    <property type="method" value="X-ray"/>
    <property type="resolution" value="1.65 A"/>
    <property type="chains" value="A=1-449"/>
</dbReference>
<dbReference type="PDB" id="1UUW">
    <property type="method" value="X-ray"/>
    <property type="resolution" value="2.30 A"/>
    <property type="chains" value="A=1-449"/>
</dbReference>
<dbReference type="PDBsum" id="1EG9"/>
<dbReference type="PDBsum" id="1NDO"/>
<dbReference type="PDBsum" id="1O7G"/>
<dbReference type="PDBsum" id="1O7H"/>
<dbReference type="PDBsum" id="1O7M"/>
<dbReference type="PDBsum" id="1O7N"/>
<dbReference type="PDBsum" id="1O7P"/>
<dbReference type="PDBsum" id="1O7W"/>
<dbReference type="PDBsum" id="1UUV"/>
<dbReference type="PDBsum" id="1UUW"/>
<dbReference type="SMR" id="P0A110"/>
<dbReference type="IntAct" id="P0A110">
    <property type="interactions" value="1"/>
</dbReference>
<dbReference type="DrugBank" id="DB08264">
    <property type="generic name" value="(1R, 2S)-cis 1,2 dihydroxy-1,2-dihydronaphthalene"/>
</dbReference>
<dbReference type="BioCyc" id="MetaCyc:MONOMER-12802"/>
<dbReference type="BRENDA" id="1.14.12.12">
    <property type="organism ID" value="5092"/>
</dbReference>
<dbReference type="UniPathway" id="UPA00082"/>
<dbReference type="EvolutionaryTrace" id="P0A110"/>
<dbReference type="GO" id="GO:0051537">
    <property type="term" value="F:2 iron, 2 sulfur cluster binding"/>
    <property type="evidence" value="ECO:0000314"/>
    <property type="project" value="UniProtKB"/>
</dbReference>
<dbReference type="GO" id="GO:0005506">
    <property type="term" value="F:iron ion binding"/>
    <property type="evidence" value="ECO:0000314"/>
    <property type="project" value="UniProtKB"/>
</dbReference>
<dbReference type="GO" id="GO:0018625">
    <property type="term" value="F:naphthalene 1,2-dioxygenase activity"/>
    <property type="evidence" value="ECO:0000314"/>
    <property type="project" value="UniProtKB"/>
</dbReference>
<dbReference type="GO" id="GO:0009056">
    <property type="term" value="P:catabolic process"/>
    <property type="evidence" value="ECO:0007669"/>
    <property type="project" value="UniProtKB-KW"/>
</dbReference>
<dbReference type="CDD" id="cd08881">
    <property type="entry name" value="RHO_alpha_C_NDO-like"/>
    <property type="match status" value="1"/>
</dbReference>
<dbReference type="CDD" id="cd03469">
    <property type="entry name" value="Rieske_RO_Alpha_N"/>
    <property type="match status" value="1"/>
</dbReference>
<dbReference type="FunFam" id="2.102.10.10:FF:000004">
    <property type="entry name" value="3-phenylpropionate/cinnamic acid dioxygenase subunit alpha"/>
    <property type="match status" value="1"/>
</dbReference>
<dbReference type="FunFam" id="3.90.380.10:FF:000007">
    <property type="entry name" value="Naphthalene 1,2-dioxygenase system, large oxygenase component"/>
    <property type="match status" value="1"/>
</dbReference>
<dbReference type="Gene3D" id="3.90.380.10">
    <property type="entry name" value="Naphthalene 1,2-dioxygenase Alpha Subunit, Chain A, domain 1"/>
    <property type="match status" value="1"/>
</dbReference>
<dbReference type="Gene3D" id="2.102.10.10">
    <property type="entry name" value="Rieske [2Fe-2S] iron-sulphur domain"/>
    <property type="match status" value="1"/>
</dbReference>
<dbReference type="InterPro" id="IPR043266">
    <property type="entry name" value="RHO_NdoB-like_C"/>
</dbReference>
<dbReference type="InterPro" id="IPR017941">
    <property type="entry name" value="Rieske_2Fe-2S"/>
</dbReference>
<dbReference type="InterPro" id="IPR036922">
    <property type="entry name" value="Rieske_2Fe-2S_sf"/>
</dbReference>
<dbReference type="InterPro" id="IPR015881">
    <property type="entry name" value="Ring-hydroxy_dOase_2Fe2S_BS"/>
</dbReference>
<dbReference type="InterPro" id="IPR015879">
    <property type="entry name" value="Ring_hydroxy_dOase_asu_C_dom"/>
</dbReference>
<dbReference type="InterPro" id="IPR001663">
    <property type="entry name" value="Rng_hydr_dOase-A"/>
</dbReference>
<dbReference type="PANTHER" id="PTHR43756:SF1">
    <property type="entry name" value="3-PHENYLPROPIONATE_CINNAMIC ACID DIOXYGENASE SUBUNIT ALPHA"/>
    <property type="match status" value="1"/>
</dbReference>
<dbReference type="PANTHER" id="PTHR43756">
    <property type="entry name" value="CHOLINE MONOOXYGENASE, CHLOROPLASTIC"/>
    <property type="match status" value="1"/>
</dbReference>
<dbReference type="Pfam" id="PF00355">
    <property type="entry name" value="Rieske"/>
    <property type="match status" value="1"/>
</dbReference>
<dbReference type="Pfam" id="PF00848">
    <property type="entry name" value="Ring_hydroxyl_A"/>
    <property type="match status" value="1"/>
</dbReference>
<dbReference type="PRINTS" id="PR00090">
    <property type="entry name" value="RNGDIOXGNASE"/>
</dbReference>
<dbReference type="SUPFAM" id="SSF55961">
    <property type="entry name" value="Bet v1-like"/>
    <property type="match status" value="1"/>
</dbReference>
<dbReference type="SUPFAM" id="SSF50022">
    <property type="entry name" value="ISP domain"/>
    <property type="match status" value="1"/>
</dbReference>
<dbReference type="PROSITE" id="PS51296">
    <property type="entry name" value="RIESKE"/>
    <property type="match status" value="1"/>
</dbReference>
<dbReference type="PROSITE" id="PS00570">
    <property type="entry name" value="RING_HYDROXYL_ALPHA"/>
    <property type="match status" value="1"/>
</dbReference>
<reference key="1">
    <citation type="journal article" date="1988" name="Gene">
        <title>Cloning, nucleotide sequence and characterization of genes encoding naphthalene dioxygenase of Pseudomonas putida strain NCIB9816.</title>
        <authorList>
            <person name="Kurkela S."/>
            <person name="Lehvaeslaiho H."/>
            <person name="Palva E.T."/>
            <person name="Teeri T.H."/>
        </authorList>
    </citation>
    <scope>NUCLEOTIDE SEQUENCE [GENOMIC DNA]</scope>
    <source>
        <strain>DSM 8368 / NCIMB 9816 / PG</strain>
    </source>
</reference>
<reference key="2">
    <citation type="journal article" date="1989" name="Genetika">
        <title>Cloning of Pseudomonas putida genes responsible for the primary stages of oxidation of naphthalene in Escherichia coli cells.</title>
        <authorList>
            <person name="Boronin A.M."/>
            <person name="Tsoi T.V."/>
            <person name="Kosheleva I.A."/>
            <person name="Arinbasarov M.U."/>
            <person name="Adanin V.M."/>
        </authorList>
    </citation>
    <scope>NUCLEOTIDE SEQUENCE [GENOMIC DNA]</scope>
    <source>
        <strain>BS202</strain>
        <plasmid>NPL1</plasmid>
    </source>
</reference>
<reference key="3">
    <citation type="journal article" date="1996" name="Gene">
        <title>Cloning and sequencing of the genes encoding 2-nitrotoluene dioxygenase from Pseudomonas sp. JS42.</title>
        <authorList>
            <person name="Parales J.V."/>
            <person name="Kumar A."/>
            <person name="Parales R.E."/>
            <person name="Gibson D.T."/>
        </authorList>
    </citation>
    <scope>NUCLEOTIDE SEQUENCE [GENOMIC DNA]</scope>
    <source>
        <strain>NCIMB 9816-4</strain>
        <plasmid>pDTG1</plasmid>
    </source>
</reference>
<reference key="4">
    <citation type="journal article" date="1993" name="Gene">
        <title>Sequences of genes encoding naphthalene dioxygenase in Pseudomonas putida strains G7 and NCIB 9816-4.</title>
        <authorList>
            <person name="Simon M.J."/>
            <person name="Osslund T.D."/>
            <person name="Saunders R."/>
            <person name="Ensley B.D."/>
            <person name="Suggs S."/>
            <person name="Harcourt A.A."/>
            <person name="Suen W.-C."/>
            <person name="Cruden D.L."/>
            <person name="Gibson D.T."/>
            <person name="Zylstra G.J."/>
        </authorList>
    </citation>
    <scope>NUCLEOTIDE SEQUENCE [GENOMIC DNA]</scope>
    <source>
        <strain>ATCC 17485 / DSM 50208 / JCM 6158 / NCIMB 12092 / Stanier 111 / Biotype A</strain>
        <plasmid>NAH7</plasmid>
    </source>
</reference>
<reference key="5">
    <citation type="submission" date="1997-06" db="EMBL/GenBank/DDBJ databases">
        <title>Naphthalene dioxygenase genes from Pseudomonas putida.</title>
        <authorList>
            <person name="Hamann C."/>
        </authorList>
    </citation>
    <scope>NUCLEOTIDE SEQUENCE [GENOMIC DNA]</scope>
    <source>
        <strain>ATCC 17484 / DSM 50222 / NCIMB 10535 / Stanier 110 / Biotype B</strain>
    </source>
</reference>
<reference key="6">
    <citation type="journal article" date="1983" name="J. Bacteriol.">
        <title>Naphthalene dioxygenase: purification and properties of a terminal oxygenase component.</title>
        <authorList>
            <person name="Ensley B.D."/>
            <person name="Gibson D.T."/>
        </authorList>
    </citation>
    <scope>FUNCTION</scope>
    <scope>CATALYTIC ACTIVITY</scope>
    <scope>COFACTOR</scope>
    <scope>SUBUNIT</scope>
    <source>
        <strain>DSM 8368 / NCIMB 9816 / PG</strain>
    </source>
</reference>
<reference key="7">
    <citation type="journal article" date="2000" name="J. Bacteriol.">
        <title>Substrate specificity of naphthalene dioxygenase: effect of specific amino acids at the active site of the enzyme.</title>
        <authorList>
            <person name="Parales R.E."/>
            <person name="Lee K."/>
            <person name="Resnick S.M."/>
            <person name="Jiang H."/>
            <person name="Lessner D.J."/>
            <person name="Gibson D.T."/>
        </authorList>
    </citation>
    <scope>FUNCTION</scope>
    <scope>CATALYTIC ACTIVITY</scope>
    <scope>MUTAGENESIS OF ASN-201; PHE-202; PHE-352; TRP-358 AND ASP-362</scope>
    <scope>PATHWAY</scope>
    <scope>SUBSTRATE SPECIFICITY</scope>
    <source>
        <strain>NCIMB 9816-4</strain>
    </source>
</reference>
<reference key="8">
    <citation type="journal article" date="1998" name="Structure">
        <title>Structure of an aromatic-ring-hydroxylating dioxygenase-naphthalene 1,2-dioxygenase.</title>
        <authorList>
            <person name="Kauppi B."/>
            <person name="Lee K."/>
            <person name="Carredano E."/>
            <person name="Parales R.E."/>
            <person name="Gibson D.T."/>
            <person name="Eklund H."/>
            <person name="Ramaswamy S."/>
        </authorList>
    </citation>
    <scope>X-RAY CRYSTALLOGRAPHY (2.25 ANGSTROMS) IN COMPLEX WITH IRON ION AND IRON-SULFUR (2FE-2S)</scope>
    <scope>COFACTOR</scope>
    <scope>SUBUNIT</scope>
    <source>
        <strain>NCIMB 9816-4</strain>
    </source>
</reference>
<reference key="9">
    <citation type="journal article" date="2000" name="J. Mol. Biol.">
        <title>Substrate binding site of naphthalene 1,2-dioxygenase: functional implications of indole binding.</title>
        <authorList>
            <person name="Carredano E."/>
            <person name="Karlsson A."/>
            <person name="Kauppi B."/>
            <person name="Choudhury D."/>
            <person name="Parales R.E."/>
            <person name="Parales J.V."/>
            <person name="Lee K."/>
            <person name="Gibson D.T."/>
            <person name="Eklund H."/>
            <person name="Ramaswamy S."/>
        </authorList>
    </citation>
    <scope>X-RAY CRYSTALLOGRAPHY (1.60 ANGSTROMS) IN COMPLEX WITH IRON ION AND IRON-SULFUR (2FE-2S)</scope>
    <scope>COFACTOR</scope>
    <source>
        <strain>NCIMB 9816-4</strain>
    </source>
</reference>
<reference key="10">
    <citation type="journal article" date="2003" name="Science">
        <title>Crystal structure of naphthalene dioxygenase: side-on binding of dioxygen to iron.</title>
        <authorList>
            <person name="Karlsson A."/>
            <person name="Parales J.V."/>
            <person name="Parales R.E."/>
            <person name="Gibson D.T."/>
            <person name="Eklund H."/>
            <person name="Ramaswamy S."/>
        </authorList>
    </citation>
    <scope>X-RAY CRYSTALLOGRAPHY (1.40 ANGSTROMS) IN COMPLEX WITH IRON ION; IRON-SULFUR (2FE-2S); SUBSTRATE AND SUBSTRATE ANALOGS</scope>
    <scope>COFACTOR</scope>
    <scope>SUBUNIT</scope>
</reference>
<reference key="11">
    <citation type="journal article" date="2005" name="J. Biol. Inorg. Chem.">
        <title>NO binding to naphthalene dioxygenase.</title>
        <authorList>
            <person name="Karlsson A."/>
            <person name="Parales J.V."/>
            <person name="Parales R.E."/>
            <person name="Gibson D.T."/>
            <person name="Eklund H."/>
            <person name="Ramaswamy S."/>
        </authorList>
    </citation>
    <scope>X-RAY CRYSTALLOGRAPHY (1.65 ANGSTROMS) IN COMPLEX WITH IRON ION; IRON-SULFUR (2FE-2S) AND SUBSTRATE ANALOGS</scope>
    <scope>COFACTOR</scope>
    <scope>SUBUNIT</scope>
</reference>